<gene>
    <name type="primary">fmtA</name>
    <name type="synonym">fmt</name>
    <name type="ordered locus">MW0940</name>
</gene>
<feature type="signal peptide" evidence="3">
    <location>
        <begin position="1"/>
        <end position="23"/>
    </location>
</feature>
<feature type="chain" id="PRO_0000043104" description="Teichoic acid D-alanine hydrolase">
    <location>
        <begin position="24"/>
        <end position="397"/>
    </location>
</feature>
<proteinExistence type="inferred from homology"/>
<protein>
    <recommendedName>
        <fullName>Teichoic acid D-alanine hydrolase</fullName>
        <ecNumber evidence="2">3.1.1.103</ecNumber>
    </recommendedName>
    <alternativeName>
        <fullName>Teichoic acid D-alanine esterase</fullName>
    </alternativeName>
</protein>
<organism>
    <name type="scientific">Staphylococcus aureus (strain MW2)</name>
    <dbReference type="NCBI Taxonomy" id="196620"/>
    <lineage>
        <taxon>Bacteria</taxon>
        <taxon>Bacillati</taxon>
        <taxon>Bacillota</taxon>
        <taxon>Bacilli</taxon>
        <taxon>Bacillales</taxon>
        <taxon>Staphylococcaceae</taxon>
        <taxon>Staphylococcus</taxon>
    </lineage>
</organism>
<dbReference type="EC" id="3.1.1.103" evidence="2"/>
<dbReference type="EMBL" id="BA000033">
    <property type="protein sequence ID" value="BAB94805.1"/>
    <property type="molecule type" value="Genomic_DNA"/>
</dbReference>
<dbReference type="RefSeq" id="WP_000671245.1">
    <property type="nucleotide sequence ID" value="NC_003923.1"/>
</dbReference>
<dbReference type="SMR" id="Q7A185"/>
<dbReference type="MEROPS" id="S12.006"/>
<dbReference type="KEGG" id="sam:MW0940"/>
<dbReference type="HOGENOM" id="CLU_020027_0_0_9"/>
<dbReference type="GO" id="GO:0005886">
    <property type="term" value="C:plasma membrane"/>
    <property type="evidence" value="ECO:0007669"/>
    <property type="project" value="UniProtKB-SubCell"/>
</dbReference>
<dbReference type="GO" id="GO:0016787">
    <property type="term" value="F:hydrolase activity"/>
    <property type="evidence" value="ECO:0007669"/>
    <property type="project" value="UniProtKB-KW"/>
</dbReference>
<dbReference type="GO" id="GO:0071555">
    <property type="term" value="P:cell wall organization"/>
    <property type="evidence" value="ECO:0007669"/>
    <property type="project" value="UniProtKB-KW"/>
</dbReference>
<dbReference type="GO" id="GO:0046677">
    <property type="term" value="P:response to antibiotic"/>
    <property type="evidence" value="ECO:0007669"/>
    <property type="project" value="UniProtKB-KW"/>
</dbReference>
<dbReference type="FunFam" id="3.40.710.10:FF:000040">
    <property type="entry name" value="Methicillin resistance protein FmtA"/>
    <property type="match status" value="1"/>
</dbReference>
<dbReference type="Gene3D" id="3.40.710.10">
    <property type="entry name" value="DD-peptidase/beta-lactamase superfamily"/>
    <property type="match status" value="1"/>
</dbReference>
<dbReference type="InterPro" id="IPR050491">
    <property type="entry name" value="Bact_CellWall_Synth/Modif"/>
</dbReference>
<dbReference type="InterPro" id="IPR001466">
    <property type="entry name" value="Beta-lactam-related"/>
</dbReference>
<dbReference type="InterPro" id="IPR012338">
    <property type="entry name" value="Beta-lactam/transpept-like"/>
</dbReference>
<dbReference type="PANTHER" id="PTHR46825">
    <property type="entry name" value="D-ALANYL-D-ALANINE-CARBOXYPEPTIDASE/ENDOPEPTIDASE AMPH"/>
    <property type="match status" value="1"/>
</dbReference>
<dbReference type="PANTHER" id="PTHR46825:SF11">
    <property type="entry name" value="PENICILLIN-BINDING PROTEIN 4"/>
    <property type="match status" value="1"/>
</dbReference>
<dbReference type="Pfam" id="PF00144">
    <property type="entry name" value="Beta-lactamase"/>
    <property type="match status" value="1"/>
</dbReference>
<dbReference type="SUPFAM" id="SSF56601">
    <property type="entry name" value="beta-lactamase/transpeptidase-like"/>
    <property type="match status" value="1"/>
</dbReference>
<accession>Q7A185</accession>
<keyword id="KW-0046">Antibiotic resistance</keyword>
<keyword id="KW-1003">Cell membrane</keyword>
<keyword id="KW-0961">Cell wall biogenesis/degradation</keyword>
<keyword id="KW-0378">Hydrolase</keyword>
<keyword id="KW-0472">Membrane</keyword>
<keyword id="KW-0732">Signal</keyword>
<evidence type="ECO:0000250" key="1"/>
<evidence type="ECO:0000250" key="2">
    <source>
        <dbReference type="UniProtKB" id="Q7A2T0"/>
    </source>
</evidence>
<evidence type="ECO:0000255" key="3"/>
<comment type="function">
    <text evidence="2">Catalyzes the liberation of D-alanyl moieties present on wall teichoic acid (WTA) and lipoteichoic acid (LTA). Affects the methicillin resistance level and autolysis in the presence of Triton X-100 as well as the cell wall structure.</text>
</comment>
<comment type="catalytic activity">
    <reaction evidence="2">
        <text>[(4-D-Ala)-(2-GlcNAc)-Rib-ol-P]n-[Gro-P]m-beta-D-ManNAc-(1-&gt;4)-alpha-D-GlcNAc-P-peptidoglycan + n H2O = [(2-GlcNAc)-Rib-ol-P]n-[Gro-P]m-beta-D-ManNAc-(1-&gt;4)-alpha-D-GlcNAc-P-peptidoglycan + n D-alanine.</text>
        <dbReference type="EC" id="3.1.1.103"/>
    </reaction>
</comment>
<comment type="subcellular location">
    <subcellularLocation>
        <location evidence="1">Cell membrane</location>
        <topology evidence="1">Peripheral membrane protein</topology>
    </subcellularLocation>
</comment>
<name>FMTA_STAAW</name>
<sequence length="397" mass="46067">MKFNKVKLVIHACVLLFIIISIALIFHRLQTKTHSIDPIHKETKLSDNEKYLVDRNKEKVAPSKLKEVYNSKDPKYKKIDKYLQSSLFNGSVAIYENGKLKMSKGYGYQDFEKGIKNTPNTMFLIGSAQKFSTGLLLKQLEEEHKININDPVSKYLPWFKTSKPIPLKDLMLHQSGLYKYKSSKDYKNLDQAVKAIQKRGIDPKKYKKHMYNDGNYLVLAKVIEEVTGKSYAENYYTKIGDPLKLQHTAFYDEQPFKKYLAKGYAYNSTGLSFLRPNILDQYYGAGNLYMTPTDMGKLITQIQQYKLFSPKITNPLLHEFGTKQYPDEYRYGFYAKPTLNRLNGGFFGQVFTVYYNDKYVVVLALNVKGNNEVRIKHIYNDILKQNKPYNTKGVIVQ</sequence>
<reference key="1">
    <citation type="journal article" date="2002" name="Lancet">
        <title>Genome and virulence determinants of high virulence community-acquired MRSA.</title>
        <authorList>
            <person name="Baba T."/>
            <person name="Takeuchi F."/>
            <person name="Kuroda M."/>
            <person name="Yuzawa H."/>
            <person name="Aoki K."/>
            <person name="Oguchi A."/>
            <person name="Nagai Y."/>
            <person name="Iwama N."/>
            <person name="Asano K."/>
            <person name="Naimi T."/>
            <person name="Kuroda H."/>
            <person name="Cui L."/>
            <person name="Yamamoto K."/>
            <person name="Hiramatsu K."/>
        </authorList>
    </citation>
    <scope>NUCLEOTIDE SEQUENCE [LARGE SCALE GENOMIC DNA]</scope>
    <source>
        <strain>MW2</strain>
    </source>
</reference>